<protein>
    <recommendedName>
        <fullName evidence="1">33 kDa chaperonin</fullName>
    </recommendedName>
    <alternativeName>
        <fullName evidence="1">Heat shock protein 33 homolog</fullName>
        <shortName evidence="1">HSP33</shortName>
    </alternativeName>
</protein>
<dbReference type="EMBL" id="CP001600">
    <property type="protein sequence ID" value="ACR70765.1"/>
    <property type="molecule type" value="Genomic_DNA"/>
</dbReference>
<dbReference type="RefSeq" id="WP_015872806.1">
    <property type="nucleotide sequence ID" value="NZ_CP169062.1"/>
</dbReference>
<dbReference type="SMR" id="C5BGR8"/>
<dbReference type="STRING" id="67780.B6E78_09840"/>
<dbReference type="GeneID" id="69540479"/>
<dbReference type="KEGG" id="eic:NT01EI_3637"/>
<dbReference type="PATRIC" id="fig|634503.3.peg.3243"/>
<dbReference type="HOGENOM" id="CLU_054493_0_0_6"/>
<dbReference type="OrthoDB" id="9793753at2"/>
<dbReference type="Proteomes" id="UP000001485">
    <property type="component" value="Chromosome"/>
</dbReference>
<dbReference type="GO" id="GO:0005737">
    <property type="term" value="C:cytoplasm"/>
    <property type="evidence" value="ECO:0007669"/>
    <property type="project" value="UniProtKB-SubCell"/>
</dbReference>
<dbReference type="GO" id="GO:0044183">
    <property type="term" value="F:protein folding chaperone"/>
    <property type="evidence" value="ECO:0007669"/>
    <property type="project" value="TreeGrafter"/>
</dbReference>
<dbReference type="GO" id="GO:0051082">
    <property type="term" value="F:unfolded protein binding"/>
    <property type="evidence" value="ECO:0007669"/>
    <property type="project" value="UniProtKB-UniRule"/>
</dbReference>
<dbReference type="GO" id="GO:0042026">
    <property type="term" value="P:protein refolding"/>
    <property type="evidence" value="ECO:0007669"/>
    <property type="project" value="TreeGrafter"/>
</dbReference>
<dbReference type="CDD" id="cd00498">
    <property type="entry name" value="Hsp33"/>
    <property type="match status" value="1"/>
</dbReference>
<dbReference type="Gene3D" id="1.10.287.480">
    <property type="entry name" value="helix hairpin bin"/>
    <property type="match status" value="1"/>
</dbReference>
<dbReference type="Gene3D" id="3.55.30.10">
    <property type="entry name" value="Hsp33 domain"/>
    <property type="match status" value="1"/>
</dbReference>
<dbReference type="Gene3D" id="3.90.1280.10">
    <property type="entry name" value="HSP33 redox switch-like"/>
    <property type="match status" value="1"/>
</dbReference>
<dbReference type="HAMAP" id="MF_00117">
    <property type="entry name" value="HslO"/>
    <property type="match status" value="1"/>
</dbReference>
<dbReference type="InterPro" id="IPR000397">
    <property type="entry name" value="Heat_shock_Hsp33"/>
</dbReference>
<dbReference type="InterPro" id="IPR016154">
    <property type="entry name" value="Heat_shock_Hsp33_C"/>
</dbReference>
<dbReference type="InterPro" id="IPR016153">
    <property type="entry name" value="Heat_shock_Hsp33_N"/>
</dbReference>
<dbReference type="InterPro" id="IPR023212">
    <property type="entry name" value="Hsp33_helix_hairpin_bin_dom_sf"/>
</dbReference>
<dbReference type="NCBIfam" id="NF001033">
    <property type="entry name" value="PRK00114.1"/>
    <property type="match status" value="1"/>
</dbReference>
<dbReference type="PANTHER" id="PTHR30111">
    <property type="entry name" value="33 KDA CHAPERONIN"/>
    <property type="match status" value="1"/>
</dbReference>
<dbReference type="PANTHER" id="PTHR30111:SF1">
    <property type="entry name" value="33 KDA CHAPERONIN"/>
    <property type="match status" value="1"/>
</dbReference>
<dbReference type="Pfam" id="PF01430">
    <property type="entry name" value="HSP33"/>
    <property type="match status" value="1"/>
</dbReference>
<dbReference type="PIRSF" id="PIRSF005261">
    <property type="entry name" value="Heat_shock_Hsp33"/>
    <property type="match status" value="1"/>
</dbReference>
<dbReference type="SUPFAM" id="SSF64397">
    <property type="entry name" value="Hsp33 domain"/>
    <property type="match status" value="1"/>
</dbReference>
<dbReference type="SUPFAM" id="SSF118352">
    <property type="entry name" value="HSP33 redox switch-like"/>
    <property type="match status" value="1"/>
</dbReference>
<evidence type="ECO:0000255" key="1">
    <source>
        <dbReference type="HAMAP-Rule" id="MF_00117"/>
    </source>
</evidence>
<keyword id="KW-0143">Chaperone</keyword>
<keyword id="KW-0963">Cytoplasm</keyword>
<keyword id="KW-1015">Disulfide bond</keyword>
<keyword id="KW-0676">Redox-active center</keyword>
<keyword id="KW-0862">Zinc</keyword>
<feature type="chain" id="PRO_1000202995" description="33 kDa chaperonin">
    <location>
        <begin position="1"/>
        <end position="293"/>
    </location>
</feature>
<feature type="disulfide bond" description="Redox-active" evidence="1">
    <location>
        <begin position="230"/>
        <end position="232"/>
    </location>
</feature>
<feature type="disulfide bond" description="Redox-active" evidence="1">
    <location>
        <begin position="263"/>
        <end position="266"/>
    </location>
</feature>
<reference key="1">
    <citation type="submission" date="2009-03" db="EMBL/GenBank/DDBJ databases">
        <title>Complete genome sequence of Edwardsiella ictaluri 93-146.</title>
        <authorList>
            <person name="Williams M.L."/>
            <person name="Gillaspy A.F."/>
            <person name="Dyer D.W."/>
            <person name="Thune R.L."/>
            <person name="Waldbieser G.C."/>
            <person name="Schuster S.C."/>
            <person name="Gipson J."/>
            <person name="Zaitshik J."/>
            <person name="Landry C."/>
            <person name="Lawrence M.L."/>
        </authorList>
    </citation>
    <scope>NUCLEOTIDE SEQUENCE [LARGE SCALE GENOMIC DNA]</scope>
    <source>
        <strain>93-146</strain>
    </source>
</reference>
<organism>
    <name type="scientific">Edwardsiella ictaluri (strain 93-146)</name>
    <dbReference type="NCBI Taxonomy" id="634503"/>
    <lineage>
        <taxon>Bacteria</taxon>
        <taxon>Pseudomonadati</taxon>
        <taxon>Pseudomonadota</taxon>
        <taxon>Gammaproteobacteria</taxon>
        <taxon>Enterobacterales</taxon>
        <taxon>Hafniaceae</taxon>
        <taxon>Edwardsiella</taxon>
    </lineage>
</organism>
<gene>
    <name evidence="1" type="primary">hslO</name>
    <name type="ordered locus">NT01EI_3637</name>
</gene>
<sequence length="293" mass="32248">MPHHDQLHRYLFDNLAVRGELVNASATYARILENHDYPAAVRALLGELLVATTLLTATLKFDGDITVQLQGDGPLKLAVINGNHRQEMRGVARLQGDIADGSSLKHMLGNGIMVITITPKEGERYQGVVALEGDTLSNCLEAYFMQSEQLPTRLFMFTGEQDGQPAAAGMLLQILPTQPNNVDDLTHLSHLTTTVTPQELFTLPANEVLYRLYNQEQVTLFEPQPIAFLCGCSRGRSASALMSLPPQQLEELLAERGSIDIHCDYCGSHYLFDRVDIDALRAGAQPDEAGQLH</sequence>
<accession>C5BGR8</accession>
<comment type="function">
    <text evidence="1">Redox regulated molecular chaperone. Protects both thermally unfolding and oxidatively damaged proteins from irreversible aggregation. Plays an important role in the bacterial defense system toward oxidative stress.</text>
</comment>
<comment type="subcellular location">
    <subcellularLocation>
        <location evidence="1">Cytoplasm</location>
    </subcellularLocation>
</comment>
<comment type="PTM">
    <text evidence="1">Under oxidizing conditions two disulfide bonds are formed involving the reactive cysteines. Under reducing conditions zinc is bound to the reactive cysteines and the protein is inactive.</text>
</comment>
<comment type="similarity">
    <text evidence="1">Belongs to the HSP33 family.</text>
</comment>
<proteinExistence type="inferred from homology"/>
<name>HSLO_EDWI9</name>